<sequence length="204" mass="22759">MSIFEYNGSAVVAMVGKNCFAIASDRRLGVQLQTIATDFQRISKIHDHLFIGLSGLATDVQTLYQRLVFRHKLYQLREERDMKPETFASLVSAILYEKRFGPFLCQPVIAGLGDDNKPFICTMDSIGAKELAKDFVVSGTASESLYGACEAMFKPDMEAEELFETISQALLSSVDRDCLSGWGGHVYVVTPKEVKERILKGRMD</sequence>
<keyword id="KW-0963">Cytoplasm</keyword>
<keyword id="KW-0539">Nucleus</keyword>
<keyword id="KW-0647">Proteasome</keyword>
<keyword id="KW-1185">Reference proteome</keyword>
<comment type="function">
    <text>Non-catalytic component of the proteasome, a multicatalytic proteinase complex which is characterized by its ability to cleave peptides with Arg, Phe, Tyr, Leu, and Glu adjacent to the leaving group at neutral or slightly basic pH. The proteasome has an ATP-dependent proteolytic activity.</text>
</comment>
<comment type="subunit">
    <text evidence="3 4 5">Component of the 20S core complex of the 26S proteasome. The 26S proteasome is composed of a core protease (CP), known as the 20S proteasome, capped at one or both ends by the 19S regulatory particle (RP/PA700). The 20S proteasome core is composed of 28 subunits that are arranged in four stacked rings, resulting in a barrel-shaped structure. The two end rings are each formed by seven alpha subunits, and the two central rings are each formed by seven beta subunits. The catalytic chamber with the active sites is on the inside of the barrel.</text>
</comment>
<comment type="subcellular location">
    <subcellularLocation>
        <location evidence="2">Cytoplasm</location>
    </subcellularLocation>
    <subcellularLocation>
        <location evidence="1">Nucleus</location>
    </subcellularLocation>
</comment>
<comment type="similarity">
    <text evidence="2">Belongs to the peptidase T1B family.</text>
</comment>
<comment type="sequence caution" evidence="6">
    <conflict type="erroneous initiation">
        <sequence resource="EMBL-CDS" id="AAG51672"/>
    </conflict>
    <text>Truncated N-terminus.</text>
</comment>
<proteinExistence type="evidence at protein level"/>
<protein>
    <recommendedName>
        <fullName>Proteasome subunit beta type-3-B</fullName>
    </recommendedName>
    <alternativeName>
        <fullName>20S proteasome beta subunit C-2</fullName>
    </alternativeName>
</protein>
<organism>
    <name type="scientific">Arabidopsis thaliana</name>
    <name type="common">Mouse-ear cress</name>
    <dbReference type="NCBI Taxonomy" id="3702"/>
    <lineage>
        <taxon>Eukaryota</taxon>
        <taxon>Viridiplantae</taxon>
        <taxon>Streptophyta</taxon>
        <taxon>Embryophyta</taxon>
        <taxon>Tracheophyta</taxon>
        <taxon>Spermatophyta</taxon>
        <taxon>Magnoliopsida</taxon>
        <taxon>eudicotyledons</taxon>
        <taxon>Gunneridae</taxon>
        <taxon>Pentapetalae</taxon>
        <taxon>rosids</taxon>
        <taxon>malvids</taxon>
        <taxon>Brassicales</taxon>
        <taxon>Brassicaceae</taxon>
        <taxon>Camelineae</taxon>
        <taxon>Arabidopsis</taxon>
    </lineage>
</organism>
<feature type="chain" id="PRO_0000148066" description="Proteasome subunit beta type-3-B">
    <location>
        <begin position="1"/>
        <end position="204"/>
    </location>
</feature>
<name>PSB3B_ARATH</name>
<accession>O81153</accession>
<accession>Q9CAR1</accession>
<accession>Q9SRH0</accession>
<gene>
    <name type="primary">PBC2</name>
    <name type="ordered locus">At1g77440</name>
    <name type="ORF">T5M16.3</name>
</gene>
<evidence type="ECO:0000250" key="1"/>
<evidence type="ECO:0000255" key="2">
    <source>
        <dbReference type="PROSITE-ProRule" id="PRU00809"/>
    </source>
</evidence>
<evidence type="ECO:0000269" key="3">
    <source>
    </source>
</evidence>
<evidence type="ECO:0000269" key="4">
    <source>
    </source>
</evidence>
<evidence type="ECO:0000269" key="5">
    <source>
    </source>
</evidence>
<evidence type="ECO:0000305" key="6"/>
<dbReference type="EMBL" id="AF043533">
    <property type="protein sequence ID" value="AAC32069.1"/>
    <property type="molecule type" value="mRNA"/>
</dbReference>
<dbReference type="EMBL" id="AC010704">
    <property type="protein sequence ID" value="AAG51672.1"/>
    <property type="status" value="ALT_INIT"/>
    <property type="molecule type" value="Genomic_DNA"/>
</dbReference>
<dbReference type="EMBL" id="CP002684">
    <property type="protein sequence ID" value="AEE35977.1"/>
    <property type="molecule type" value="Genomic_DNA"/>
</dbReference>
<dbReference type="EMBL" id="CP002684">
    <property type="protein sequence ID" value="AEE35978.1"/>
    <property type="molecule type" value="Genomic_DNA"/>
</dbReference>
<dbReference type="EMBL" id="AF385730">
    <property type="protein sequence ID" value="AAK60320.1"/>
    <property type="molecule type" value="mRNA"/>
</dbReference>
<dbReference type="EMBL" id="AY081735">
    <property type="protein sequence ID" value="AAL87388.1"/>
    <property type="molecule type" value="mRNA"/>
</dbReference>
<dbReference type="PIR" id="F96803">
    <property type="entry name" value="F96803"/>
</dbReference>
<dbReference type="PIR" id="T51981">
    <property type="entry name" value="T51981"/>
</dbReference>
<dbReference type="RefSeq" id="NP_001031294.1">
    <property type="nucleotide sequence ID" value="NM_001036217.1"/>
</dbReference>
<dbReference type="RefSeq" id="NP_565156.1">
    <property type="nucleotide sequence ID" value="NM_106393.5"/>
</dbReference>
<dbReference type="SMR" id="O81153"/>
<dbReference type="BioGRID" id="29299">
    <property type="interactions" value="39"/>
</dbReference>
<dbReference type="FunCoup" id="O81153">
    <property type="interactions" value="4663"/>
</dbReference>
<dbReference type="IntAct" id="O81153">
    <property type="interactions" value="1"/>
</dbReference>
<dbReference type="STRING" id="3702.O81153"/>
<dbReference type="PaxDb" id="3702-AT1G77440.1"/>
<dbReference type="ProteomicsDB" id="248888"/>
<dbReference type="EnsemblPlants" id="AT1G77440.1">
    <property type="protein sequence ID" value="AT1G77440.1"/>
    <property type="gene ID" value="AT1G77440"/>
</dbReference>
<dbReference type="EnsemblPlants" id="AT1G77440.2">
    <property type="protein sequence ID" value="AT1G77440.2"/>
    <property type="gene ID" value="AT1G77440"/>
</dbReference>
<dbReference type="GeneID" id="844080"/>
<dbReference type="Gramene" id="AT1G77440.1">
    <property type="protein sequence ID" value="AT1G77440.1"/>
    <property type="gene ID" value="AT1G77440"/>
</dbReference>
<dbReference type="Gramene" id="AT1G77440.2">
    <property type="protein sequence ID" value="AT1G77440.2"/>
    <property type="gene ID" value="AT1G77440"/>
</dbReference>
<dbReference type="KEGG" id="ath:AT1G77440"/>
<dbReference type="Araport" id="AT1G77440"/>
<dbReference type="TAIR" id="AT1G77440">
    <property type="gene designation" value="PBC2"/>
</dbReference>
<dbReference type="eggNOG" id="KOG0180">
    <property type="taxonomic scope" value="Eukaryota"/>
</dbReference>
<dbReference type="HOGENOM" id="CLU_035750_10_0_1"/>
<dbReference type="InParanoid" id="O81153"/>
<dbReference type="OrthoDB" id="204949at2759"/>
<dbReference type="PhylomeDB" id="O81153"/>
<dbReference type="PRO" id="PR:O81153"/>
<dbReference type="Proteomes" id="UP000006548">
    <property type="component" value="Chromosome 1"/>
</dbReference>
<dbReference type="ExpressionAtlas" id="O81153">
    <property type="expression patterns" value="baseline and differential"/>
</dbReference>
<dbReference type="GO" id="GO:0005739">
    <property type="term" value="C:mitochondrion"/>
    <property type="evidence" value="ECO:0007005"/>
    <property type="project" value="TAIR"/>
</dbReference>
<dbReference type="GO" id="GO:0005634">
    <property type="term" value="C:nucleus"/>
    <property type="evidence" value="ECO:0007669"/>
    <property type="project" value="UniProtKB-SubCell"/>
</dbReference>
<dbReference type="GO" id="GO:0000502">
    <property type="term" value="C:proteasome complex"/>
    <property type="evidence" value="ECO:0000314"/>
    <property type="project" value="TAIR"/>
</dbReference>
<dbReference type="GO" id="GO:0019774">
    <property type="term" value="C:proteasome core complex, beta-subunit complex"/>
    <property type="evidence" value="ECO:0000250"/>
    <property type="project" value="UniProtKB"/>
</dbReference>
<dbReference type="GO" id="GO:0043161">
    <property type="term" value="P:proteasome-mediated ubiquitin-dependent protein catabolic process"/>
    <property type="evidence" value="ECO:0007669"/>
    <property type="project" value="InterPro"/>
</dbReference>
<dbReference type="CDD" id="cd03759">
    <property type="entry name" value="proteasome_beta_type_3"/>
    <property type="match status" value="1"/>
</dbReference>
<dbReference type="FunFam" id="3.60.20.10:FF:000032">
    <property type="entry name" value="Proteasome subunit beta"/>
    <property type="match status" value="1"/>
</dbReference>
<dbReference type="Gene3D" id="3.60.20.10">
    <property type="entry name" value="Glutamine Phosphoribosylpyrophosphate, subunit 1, domain 1"/>
    <property type="match status" value="1"/>
</dbReference>
<dbReference type="InterPro" id="IPR029055">
    <property type="entry name" value="Ntn_hydrolases_N"/>
</dbReference>
<dbReference type="InterPro" id="IPR033811">
    <property type="entry name" value="Proteasome_beta_3"/>
</dbReference>
<dbReference type="InterPro" id="IPR016050">
    <property type="entry name" value="Proteasome_bsu_CS"/>
</dbReference>
<dbReference type="InterPro" id="IPR001353">
    <property type="entry name" value="Proteasome_sua/b"/>
</dbReference>
<dbReference type="InterPro" id="IPR023333">
    <property type="entry name" value="Proteasome_suB-type"/>
</dbReference>
<dbReference type="PANTHER" id="PTHR32194">
    <property type="entry name" value="METALLOPROTEASE TLDD"/>
    <property type="match status" value="1"/>
</dbReference>
<dbReference type="PANTHER" id="PTHR32194:SF10">
    <property type="entry name" value="PROTEASOME SUBUNIT BETA TYPE-3"/>
    <property type="match status" value="1"/>
</dbReference>
<dbReference type="Pfam" id="PF00227">
    <property type="entry name" value="Proteasome"/>
    <property type="match status" value="1"/>
</dbReference>
<dbReference type="SUPFAM" id="SSF56235">
    <property type="entry name" value="N-terminal nucleophile aminohydrolases (Ntn hydrolases)"/>
    <property type="match status" value="1"/>
</dbReference>
<dbReference type="PROSITE" id="PS00854">
    <property type="entry name" value="PROTEASOME_BETA_1"/>
    <property type="match status" value="1"/>
</dbReference>
<dbReference type="PROSITE" id="PS51476">
    <property type="entry name" value="PROTEASOME_BETA_2"/>
    <property type="match status" value="1"/>
</dbReference>
<reference key="1">
    <citation type="journal article" date="1998" name="Genetics">
        <title>Molecular organization of the 20S proteasome gene family from Arabidopsis thaliana.</title>
        <authorList>
            <person name="Fu H."/>
            <person name="Doelling J.H."/>
            <person name="Arendt C.S."/>
            <person name="Hochstrasser M."/>
            <person name="Vierstra R.D."/>
        </authorList>
    </citation>
    <scope>NUCLEOTIDE SEQUENCE [MRNA]</scope>
    <scope>GENE FAMILY</scope>
    <scope>NOMENCLATURE</scope>
    <source>
        <strain>cv. Columbia</strain>
    </source>
</reference>
<reference key="2">
    <citation type="journal article" date="2000" name="Nature">
        <title>Sequence and analysis of chromosome 1 of the plant Arabidopsis thaliana.</title>
        <authorList>
            <person name="Theologis A."/>
            <person name="Ecker J.R."/>
            <person name="Palm C.J."/>
            <person name="Federspiel N.A."/>
            <person name="Kaul S."/>
            <person name="White O."/>
            <person name="Alonso J."/>
            <person name="Altafi H."/>
            <person name="Araujo R."/>
            <person name="Bowman C.L."/>
            <person name="Brooks S.Y."/>
            <person name="Buehler E."/>
            <person name="Chan A."/>
            <person name="Chao Q."/>
            <person name="Chen H."/>
            <person name="Cheuk R.F."/>
            <person name="Chin C.W."/>
            <person name="Chung M.K."/>
            <person name="Conn L."/>
            <person name="Conway A.B."/>
            <person name="Conway A.R."/>
            <person name="Creasy T.H."/>
            <person name="Dewar K."/>
            <person name="Dunn P."/>
            <person name="Etgu P."/>
            <person name="Feldblyum T.V."/>
            <person name="Feng J.-D."/>
            <person name="Fong B."/>
            <person name="Fujii C.Y."/>
            <person name="Gill J.E."/>
            <person name="Goldsmith A.D."/>
            <person name="Haas B."/>
            <person name="Hansen N.F."/>
            <person name="Hughes B."/>
            <person name="Huizar L."/>
            <person name="Hunter J.L."/>
            <person name="Jenkins J."/>
            <person name="Johnson-Hopson C."/>
            <person name="Khan S."/>
            <person name="Khaykin E."/>
            <person name="Kim C.J."/>
            <person name="Koo H.L."/>
            <person name="Kremenetskaia I."/>
            <person name="Kurtz D.B."/>
            <person name="Kwan A."/>
            <person name="Lam B."/>
            <person name="Langin-Hooper S."/>
            <person name="Lee A."/>
            <person name="Lee J.M."/>
            <person name="Lenz C.A."/>
            <person name="Li J.H."/>
            <person name="Li Y.-P."/>
            <person name="Lin X."/>
            <person name="Liu S.X."/>
            <person name="Liu Z.A."/>
            <person name="Luros J.S."/>
            <person name="Maiti R."/>
            <person name="Marziali A."/>
            <person name="Militscher J."/>
            <person name="Miranda M."/>
            <person name="Nguyen M."/>
            <person name="Nierman W.C."/>
            <person name="Osborne B.I."/>
            <person name="Pai G."/>
            <person name="Peterson J."/>
            <person name="Pham P.K."/>
            <person name="Rizzo M."/>
            <person name="Rooney T."/>
            <person name="Rowley D."/>
            <person name="Sakano H."/>
            <person name="Salzberg S.L."/>
            <person name="Schwartz J.R."/>
            <person name="Shinn P."/>
            <person name="Southwick A.M."/>
            <person name="Sun H."/>
            <person name="Tallon L.J."/>
            <person name="Tambunga G."/>
            <person name="Toriumi M.J."/>
            <person name="Town C.D."/>
            <person name="Utterback T."/>
            <person name="Van Aken S."/>
            <person name="Vaysberg M."/>
            <person name="Vysotskaia V.S."/>
            <person name="Walker M."/>
            <person name="Wu D."/>
            <person name="Yu G."/>
            <person name="Fraser C.M."/>
            <person name="Venter J.C."/>
            <person name="Davis R.W."/>
        </authorList>
    </citation>
    <scope>NUCLEOTIDE SEQUENCE [LARGE SCALE GENOMIC DNA]</scope>
    <source>
        <strain>cv. Columbia</strain>
    </source>
</reference>
<reference key="3">
    <citation type="journal article" date="2017" name="Plant J.">
        <title>Araport11: a complete reannotation of the Arabidopsis thaliana reference genome.</title>
        <authorList>
            <person name="Cheng C.Y."/>
            <person name="Krishnakumar V."/>
            <person name="Chan A.P."/>
            <person name="Thibaud-Nissen F."/>
            <person name="Schobel S."/>
            <person name="Town C.D."/>
        </authorList>
    </citation>
    <scope>GENOME REANNOTATION</scope>
    <source>
        <strain>cv. Columbia</strain>
    </source>
</reference>
<reference key="4">
    <citation type="journal article" date="2003" name="Science">
        <title>Empirical analysis of transcriptional activity in the Arabidopsis genome.</title>
        <authorList>
            <person name="Yamada K."/>
            <person name="Lim J."/>
            <person name="Dale J.M."/>
            <person name="Chen H."/>
            <person name="Shinn P."/>
            <person name="Palm C.J."/>
            <person name="Southwick A.M."/>
            <person name="Wu H.C."/>
            <person name="Kim C.J."/>
            <person name="Nguyen M."/>
            <person name="Pham P.K."/>
            <person name="Cheuk R.F."/>
            <person name="Karlin-Newmann G."/>
            <person name="Liu S.X."/>
            <person name="Lam B."/>
            <person name="Sakano H."/>
            <person name="Wu T."/>
            <person name="Yu G."/>
            <person name="Miranda M."/>
            <person name="Quach H.L."/>
            <person name="Tripp M."/>
            <person name="Chang C.H."/>
            <person name="Lee J.M."/>
            <person name="Toriumi M.J."/>
            <person name="Chan M.M."/>
            <person name="Tang C.C."/>
            <person name="Onodera C.S."/>
            <person name="Deng J.M."/>
            <person name="Akiyama K."/>
            <person name="Ansari Y."/>
            <person name="Arakawa T."/>
            <person name="Banh J."/>
            <person name="Banno F."/>
            <person name="Bowser L."/>
            <person name="Brooks S.Y."/>
            <person name="Carninci P."/>
            <person name="Chao Q."/>
            <person name="Choy N."/>
            <person name="Enju A."/>
            <person name="Goldsmith A.D."/>
            <person name="Gurjal M."/>
            <person name="Hansen N.F."/>
            <person name="Hayashizaki Y."/>
            <person name="Johnson-Hopson C."/>
            <person name="Hsuan V.W."/>
            <person name="Iida K."/>
            <person name="Karnes M."/>
            <person name="Khan S."/>
            <person name="Koesema E."/>
            <person name="Ishida J."/>
            <person name="Jiang P.X."/>
            <person name="Jones T."/>
            <person name="Kawai J."/>
            <person name="Kamiya A."/>
            <person name="Meyers C."/>
            <person name="Nakajima M."/>
            <person name="Narusaka M."/>
            <person name="Seki M."/>
            <person name="Sakurai T."/>
            <person name="Satou M."/>
            <person name="Tamse R."/>
            <person name="Vaysberg M."/>
            <person name="Wallender E.K."/>
            <person name="Wong C."/>
            <person name="Yamamura Y."/>
            <person name="Yuan S."/>
            <person name="Shinozaki K."/>
            <person name="Davis R.W."/>
            <person name="Theologis A."/>
            <person name="Ecker J.R."/>
        </authorList>
    </citation>
    <scope>NUCLEOTIDE SEQUENCE [LARGE SCALE MRNA]</scope>
    <source>
        <strain>cv. Columbia</strain>
    </source>
</reference>
<reference key="5">
    <citation type="journal article" date="1999" name="Mol. Biol. Rep.">
        <title>Structure and functional analyses of the 26S proteasome subunits from plants.</title>
        <authorList>
            <person name="Fu H."/>
            <person name="Girod P.-A."/>
            <person name="Doelling J.H."/>
            <person name="van Nocker S."/>
            <person name="Hochstrasser M."/>
            <person name="Finley D."/>
            <person name="Vierstra R.D."/>
        </authorList>
    </citation>
    <scope>SUBUNIT</scope>
</reference>
<reference key="6">
    <citation type="journal article" date="2004" name="J. Biol. Chem.">
        <title>Purification of the Arabidopsis 26 S proteasome: biochemical and molecular analyses revealed the presence of multiple isoforms.</title>
        <authorList>
            <person name="Yang P."/>
            <person name="Fu H."/>
            <person name="Walker J."/>
            <person name="Papa C.M."/>
            <person name="Smalle J."/>
            <person name="Ju Y.-M."/>
            <person name="Vierstra R.D."/>
        </authorList>
    </citation>
    <scope>SUBUNIT</scope>
    <scope>IDENTIFICATION BY MASS SPECTROMETRY</scope>
</reference>
<reference key="7">
    <citation type="journal article" date="2010" name="J. Biol. Chem.">
        <title>Affinity purification of the Arabidopsis 26 S proteasome reveals a diverse array of plant proteolytic complexes.</title>
        <authorList>
            <person name="Book A.J."/>
            <person name="Gladman N.P."/>
            <person name="Lee S.S."/>
            <person name="Scalf M."/>
            <person name="Smith L.M."/>
            <person name="Vierstra R.D."/>
        </authorList>
    </citation>
    <scope>IDENTIFICATION BY MASS SPECTROMETRY</scope>
    <scope>CHARACTERIZATION OF THE 26S PROTEASOME COMPLEX</scope>
    <scope>SUBUNIT</scope>
</reference>